<gene>
    <name evidence="1" type="primary">prcA</name>
    <name type="ordered locus">NFA_31710</name>
</gene>
<sequence>MTLPYYASAEQIMRDKTELARKGIARGRSVVVLTYDKGVLFVAENPSATLHKVSELYDRIGFAAVGKYNEFESLRRGGILQADLRGYQYDRRDVTGRALANAYAQALGTVFNDQLKPFEVEICVAEVGYPEQSPEAVLYRINFDGAIVDEREFVVMGGTTEPIVAALKDSYQPGLDLSSAVGVAVQALQASGPEGADKEKRTIGVSQLEVATLEQARPRRAFRRVTKTALEQLLVGNGVDTSVGKATTTVELPEEPAE</sequence>
<comment type="function">
    <text evidence="1">Component of the proteasome core, a large protease complex with broad specificity involved in protein degradation.</text>
</comment>
<comment type="activity regulation">
    <text evidence="1">The formation of the proteasomal ATPase ARC-20S proteasome complex, likely via the docking of the C-termini of ARC into the intersubunit pockets in the alpha-rings, may trigger opening of the gate for substrate entry. Interconversion between the open-gate and close-gate conformations leads to a dynamic regulation of the 20S proteasome proteolysis activity.</text>
</comment>
<comment type="pathway">
    <text evidence="1">Protein degradation; proteasomal Pup-dependent pathway.</text>
</comment>
<comment type="subunit">
    <text evidence="1">The 20S proteasome core is composed of 14 alpha and 14 beta subunits that assemble into four stacked heptameric rings, resulting in a barrel-shaped structure. The two inner rings, each composed of seven catalytic beta subunits, are sandwiched by two outer rings, each composed of seven alpha subunits. The catalytic chamber with the active sites is on the inside of the barrel. Has a gated structure, the ends of the cylinder being occluded by the N-termini of the alpha-subunits. Is capped by the proteasome-associated ATPase, ARC.</text>
</comment>
<comment type="subcellular location">
    <subcellularLocation>
        <location evidence="1">Cytoplasm</location>
    </subcellularLocation>
</comment>
<comment type="similarity">
    <text evidence="1">Belongs to the peptidase T1A family.</text>
</comment>
<organism>
    <name type="scientific">Nocardia farcinica (strain IFM 10152)</name>
    <dbReference type="NCBI Taxonomy" id="247156"/>
    <lineage>
        <taxon>Bacteria</taxon>
        <taxon>Bacillati</taxon>
        <taxon>Actinomycetota</taxon>
        <taxon>Actinomycetes</taxon>
        <taxon>Mycobacteriales</taxon>
        <taxon>Nocardiaceae</taxon>
        <taxon>Nocardia</taxon>
    </lineage>
</organism>
<reference key="1">
    <citation type="journal article" date="2004" name="Proc. Natl. Acad. Sci. U.S.A.">
        <title>The complete genomic sequence of Nocardia farcinica IFM 10152.</title>
        <authorList>
            <person name="Ishikawa J."/>
            <person name="Yamashita A."/>
            <person name="Mikami Y."/>
            <person name="Hoshino Y."/>
            <person name="Kurita H."/>
            <person name="Hotta K."/>
            <person name="Shiba T."/>
            <person name="Hattori M."/>
        </authorList>
    </citation>
    <scope>NUCLEOTIDE SEQUENCE [LARGE SCALE GENOMIC DNA]</scope>
    <source>
        <strain>IFM 10152</strain>
    </source>
</reference>
<keyword id="KW-0963">Cytoplasm</keyword>
<keyword id="KW-0647">Proteasome</keyword>
<keyword id="KW-1185">Reference proteome</keyword>
<evidence type="ECO:0000255" key="1">
    <source>
        <dbReference type="HAMAP-Rule" id="MF_00289"/>
    </source>
</evidence>
<dbReference type="EMBL" id="AP006618">
    <property type="protein sequence ID" value="BAD58018.1"/>
    <property type="molecule type" value="Genomic_DNA"/>
</dbReference>
<dbReference type="RefSeq" id="WP_011209703.1">
    <property type="nucleotide sequence ID" value="NC_006361.1"/>
</dbReference>
<dbReference type="SMR" id="Q5YUX3"/>
<dbReference type="STRING" id="247156.NFA_31710"/>
<dbReference type="MEROPS" id="T01.980"/>
<dbReference type="GeneID" id="61133886"/>
<dbReference type="KEGG" id="nfa:NFA_31710"/>
<dbReference type="eggNOG" id="COG0638">
    <property type="taxonomic scope" value="Bacteria"/>
</dbReference>
<dbReference type="HOGENOM" id="CLU_071031_0_0_11"/>
<dbReference type="OrthoDB" id="9775643at2"/>
<dbReference type="UniPathway" id="UPA00997"/>
<dbReference type="Proteomes" id="UP000006820">
    <property type="component" value="Chromosome"/>
</dbReference>
<dbReference type="GO" id="GO:0005737">
    <property type="term" value="C:cytoplasm"/>
    <property type="evidence" value="ECO:0007669"/>
    <property type="project" value="UniProtKB-SubCell"/>
</dbReference>
<dbReference type="GO" id="GO:0019773">
    <property type="term" value="C:proteasome core complex, alpha-subunit complex"/>
    <property type="evidence" value="ECO:0007669"/>
    <property type="project" value="UniProtKB-UniRule"/>
</dbReference>
<dbReference type="GO" id="GO:0004298">
    <property type="term" value="F:threonine-type endopeptidase activity"/>
    <property type="evidence" value="ECO:0007669"/>
    <property type="project" value="InterPro"/>
</dbReference>
<dbReference type="GO" id="GO:0019941">
    <property type="term" value="P:modification-dependent protein catabolic process"/>
    <property type="evidence" value="ECO:0007669"/>
    <property type="project" value="UniProtKB-UniRule"/>
</dbReference>
<dbReference type="GO" id="GO:0010498">
    <property type="term" value="P:proteasomal protein catabolic process"/>
    <property type="evidence" value="ECO:0007669"/>
    <property type="project" value="UniProtKB-UniRule"/>
</dbReference>
<dbReference type="Gene3D" id="3.60.20.10">
    <property type="entry name" value="Glutamine Phosphoribosylpyrophosphate, subunit 1, domain 1"/>
    <property type="match status" value="1"/>
</dbReference>
<dbReference type="HAMAP" id="MF_00289_B">
    <property type="entry name" value="Proteasome_A_B"/>
    <property type="match status" value="1"/>
</dbReference>
<dbReference type="InterPro" id="IPR029055">
    <property type="entry name" value="Ntn_hydrolases_N"/>
</dbReference>
<dbReference type="InterPro" id="IPR023332">
    <property type="entry name" value="Proteasome_alpha-type"/>
</dbReference>
<dbReference type="InterPro" id="IPR022296">
    <property type="entry name" value="Proteasome_asu_bac"/>
</dbReference>
<dbReference type="InterPro" id="IPR001353">
    <property type="entry name" value="Proteasome_sua/b"/>
</dbReference>
<dbReference type="NCBIfam" id="TIGR03691">
    <property type="entry name" value="20S_bact_alpha"/>
    <property type="match status" value="1"/>
</dbReference>
<dbReference type="Pfam" id="PF00227">
    <property type="entry name" value="Proteasome"/>
    <property type="match status" value="1"/>
</dbReference>
<dbReference type="SUPFAM" id="SSF56235">
    <property type="entry name" value="N-terminal nucleophile aminohydrolases (Ntn hydrolases)"/>
    <property type="match status" value="1"/>
</dbReference>
<dbReference type="PROSITE" id="PS51475">
    <property type="entry name" value="PROTEASOME_ALPHA_2"/>
    <property type="match status" value="1"/>
</dbReference>
<feature type="chain" id="PRO_0000397164" description="Proteasome subunit alpha">
    <location>
        <begin position="1"/>
        <end position="258"/>
    </location>
</feature>
<accession>Q5YUX3</accession>
<protein>
    <recommendedName>
        <fullName evidence="1">Proteasome subunit alpha</fullName>
    </recommendedName>
    <alternativeName>
        <fullName evidence="1">20S proteasome alpha subunit</fullName>
    </alternativeName>
    <alternativeName>
        <fullName evidence="1">Proteasome core protein PrcA</fullName>
    </alternativeName>
</protein>
<proteinExistence type="inferred from homology"/>
<name>PSA_NOCFA</name>